<organism>
    <name type="scientific">Draba nemorosa</name>
    <name type="common">Woodland whitlowgrass</name>
    <dbReference type="NCBI Taxonomy" id="171822"/>
    <lineage>
        <taxon>Eukaryota</taxon>
        <taxon>Viridiplantae</taxon>
        <taxon>Streptophyta</taxon>
        <taxon>Embryophyta</taxon>
        <taxon>Tracheophyta</taxon>
        <taxon>Spermatophyta</taxon>
        <taxon>Magnoliopsida</taxon>
        <taxon>eudicotyledons</taxon>
        <taxon>Gunneridae</taxon>
        <taxon>Pentapetalae</taxon>
        <taxon>rosids</taxon>
        <taxon>malvids</taxon>
        <taxon>Brassicales</taxon>
        <taxon>Brassicaceae</taxon>
        <taxon>Arabideae</taxon>
        <taxon>Draba</taxon>
    </lineage>
</organism>
<evidence type="ECO:0000255" key="1">
    <source>
        <dbReference type="HAMAP-Rule" id="MF_00438"/>
    </source>
</evidence>
<protein>
    <recommendedName>
        <fullName evidence="1">Photosystem II reaction center protein M</fullName>
        <shortName evidence="1">PSII-M</shortName>
    </recommendedName>
</protein>
<keyword id="KW-0150">Chloroplast</keyword>
<keyword id="KW-0472">Membrane</keyword>
<keyword id="KW-0602">Photosynthesis</keyword>
<keyword id="KW-0604">Photosystem II</keyword>
<keyword id="KW-0934">Plastid</keyword>
<keyword id="KW-0674">Reaction center</keyword>
<keyword id="KW-0793">Thylakoid</keyword>
<keyword id="KW-0812">Transmembrane</keyword>
<keyword id="KW-1133">Transmembrane helix</keyword>
<dbReference type="EMBL" id="AP009373">
    <property type="protein sequence ID" value="BAF50368.1"/>
    <property type="molecule type" value="Genomic_DNA"/>
</dbReference>
<dbReference type="RefSeq" id="YP_001123544.1">
    <property type="nucleotide sequence ID" value="NC_009272.1"/>
</dbReference>
<dbReference type="SMR" id="A4QL13"/>
<dbReference type="GeneID" id="4964725"/>
<dbReference type="GO" id="GO:0009535">
    <property type="term" value="C:chloroplast thylakoid membrane"/>
    <property type="evidence" value="ECO:0007669"/>
    <property type="project" value="UniProtKB-SubCell"/>
</dbReference>
<dbReference type="GO" id="GO:0009523">
    <property type="term" value="C:photosystem II"/>
    <property type="evidence" value="ECO:0007669"/>
    <property type="project" value="UniProtKB-KW"/>
</dbReference>
<dbReference type="GO" id="GO:0019684">
    <property type="term" value="P:photosynthesis, light reaction"/>
    <property type="evidence" value="ECO:0007669"/>
    <property type="project" value="InterPro"/>
</dbReference>
<dbReference type="HAMAP" id="MF_00438">
    <property type="entry name" value="PSII_PsbM"/>
    <property type="match status" value="1"/>
</dbReference>
<dbReference type="InterPro" id="IPR007826">
    <property type="entry name" value="PSII_PsbM"/>
</dbReference>
<dbReference type="InterPro" id="IPR037269">
    <property type="entry name" value="PSII_PsbM_sf"/>
</dbReference>
<dbReference type="NCBIfam" id="TIGR03038">
    <property type="entry name" value="PS_II_psbM"/>
    <property type="match status" value="1"/>
</dbReference>
<dbReference type="PANTHER" id="PTHR35774">
    <property type="entry name" value="PHOTOSYSTEM II REACTION CENTER PROTEIN M"/>
    <property type="match status" value="1"/>
</dbReference>
<dbReference type="PANTHER" id="PTHR35774:SF1">
    <property type="entry name" value="PHOTOSYSTEM II REACTION CENTER PROTEIN M"/>
    <property type="match status" value="1"/>
</dbReference>
<dbReference type="Pfam" id="PF05151">
    <property type="entry name" value="PsbM"/>
    <property type="match status" value="1"/>
</dbReference>
<dbReference type="SUPFAM" id="SSF161033">
    <property type="entry name" value="Photosystem II reaction center protein M, PsbM"/>
    <property type="match status" value="1"/>
</dbReference>
<accession>A4QL13</accession>
<feature type="chain" id="PRO_0000325733" description="Photosystem II reaction center protein M">
    <location>
        <begin position="1"/>
        <end position="34"/>
    </location>
</feature>
<feature type="transmembrane region" description="Helical" evidence="1">
    <location>
        <begin position="5"/>
        <end position="25"/>
    </location>
</feature>
<proteinExistence type="inferred from homology"/>
<reference key="1">
    <citation type="submission" date="2007-03" db="EMBL/GenBank/DDBJ databases">
        <title>Sequencing analysis of Draba nemoroza chloroplast DNA.</title>
        <authorList>
            <person name="Hosouchi T."/>
            <person name="Tsuruoka H."/>
            <person name="Kotani H."/>
        </authorList>
    </citation>
    <scope>NUCLEOTIDE SEQUENCE [LARGE SCALE GENOMIC DNA]</scope>
</reference>
<geneLocation type="chloroplast"/>
<comment type="function">
    <text evidence="1">One of the components of the core complex of photosystem II (PSII). PSII is a light-driven water:plastoquinone oxidoreductase that uses light energy to abstract electrons from H(2)O, generating O(2) and a proton gradient subsequently used for ATP formation. It consists of a core antenna complex that captures photons, and an electron transfer chain that converts photonic excitation into a charge separation. This subunit is found at the monomer-monomer interface.</text>
</comment>
<comment type="subunit">
    <text evidence="1">PSII is composed of 1 copy each of membrane proteins PsbA, PsbB, PsbC, PsbD, PsbE, PsbF, PsbH, PsbI, PsbJ, PsbK, PsbL, PsbM, PsbT, PsbX, PsbY, PsbZ, Psb30/Ycf12, at least 3 peripheral proteins of the oxygen-evolving complex and a large number of cofactors. It forms dimeric complexes.</text>
</comment>
<comment type="subcellular location">
    <subcellularLocation>
        <location evidence="1">Plastid</location>
        <location evidence="1">Chloroplast thylakoid membrane</location>
        <topology evidence="1">Single-pass membrane protein</topology>
    </subcellularLocation>
</comment>
<comment type="similarity">
    <text evidence="1">Belongs to the PsbM family.</text>
</comment>
<sequence length="34" mass="3782">MEVNILAFIATALFILVPTAFLLIIYVKTVSQNN</sequence>
<name>PSBM_DRANE</name>
<gene>
    <name evidence="1" type="primary">psbM</name>
</gene>